<name>RBFA_ECOSE</name>
<dbReference type="EMBL" id="AP009240">
    <property type="protein sequence ID" value="BAG78977.1"/>
    <property type="molecule type" value="Genomic_DNA"/>
</dbReference>
<dbReference type="RefSeq" id="WP_001040205.1">
    <property type="nucleotide sequence ID" value="NC_011415.1"/>
</dbReference>
<dbReference type="SMR" id="B6I1P2"/>
<dbReference type="GeneID" id="93778816"/>
<dbReference type="KEGG" id="ecy:ECSE_3453"/>
<dbReference type="HOGENOM" id="CLU_089475_5_0_6"/>
<dbReference type="Proteomes" id="UP000008199">
    <property type="component" value="Chromosome"/>
</dbReference>
<dbReference type="GO" id="GO:0005829">
    <property type="term" value="C:cytosol"/>
    <property type="evidence" value="ECO:0007669"/>
    <property type="project" value="TreeGrafter"/>
</dbReference>
<dbReference type="GO" id="GO:0043024">
    <property type="term" value="F:ribosomal small subunit binding"/>
    <property type="evidence" value="ECO:0007669"/>
    <property type="project" value="TreeGrafter"/>
</dbReference>
<dbReference type="GO" id="GO:0030490">
    <property type="term" value="P:maturation of SSU-rRNA"/>
    <property type="evidence" value="ECO:0007669"/>
    <property type="project" value="UniProtKB-UniRule"/>
</dbReference>
<dbReference type="FunFam" id="3.30.300.20:FF:000007">
    <property type="entry name" value="Ribosome-binding factor A"/>
    <property type="match status" value="1"/>
</dbReference>
<dbReference type="Gene3D" id="3.30.300.20">
    <property type="match status" value="1"/>
</dbReference>
<dbReference type="HAMAP" id="MF_00003">
    <property type="entry name" value="RbfA"/>
    <property type="match status" value="1"/>
</dbReference>
<dbReference type="InterPro" id="IPR015946">
    <property type="entry name" value="KH_dom-like_a/b"/>
</dbReference>
<dbReference type="InterPro" id="IPR000238">
    <property type="entry name" value="RbfA"/>
</dbReference>
<dbReference type="InterPro" id="IPR023799">
    <property type="entry name" value="RbfA_dom_sf"/>
</dbReference>
<dbReference type="InterPro" id="IPR020053">
    <property type="entry name" value="Ribosome-bd_factorA_CS"/>
</dbReference>
<dbReference type="NCBIfam" id="TIGR00082">
    <property type="entry name" value="rbfA"/>
    <property type="match status" value="1"/>
</dbReference>
<dbReference type="PANTHER" id="PTHR33515">
    <property type="entry name" value="RIBOSOME-BINDING FACTOR A, CHLOROPLASTIC-RELATED"/>
    <property type="match status" value="1"/>
</dbReference>
<dbReference type="PANTHER" id="PTHR33515:SF1">
    <property type="entry name" value="RIBOSOME-BINDING FACTOR A, CHLOROPLASTIC-RELATED"/>
    <property type="match status" value="1"/>
</dbReference>
<dbReference type="Pfam" id="PF02033">
    <property type="entry name" value="RBFA"/>
    <property type="match status" value="1"/>
</dbReference>
<dbReference type="SUPFAM" id="SSF89919">
    <property type="entry name" value="Ribosome-binding factor A, RbfA"/>
    <property type="match status" value="1"/>
</dbReference>
<dbReference type="PROSITE" id="PS01319">
    <property type="entry name" value="RBFA"/>
    <property type="match status" value="1"/>
</dbReference>
<protein>
    <recommendedName>
        <fullName evidence="1">Ribosome-binding factor A</fullName>
    </recommendedName>
</protein>
<accession>B6I1P2</accession>
<organism>
    <name type="scientific">Escherichia coli (strain SE11)</name>
    <dbReference type="NCBI Taxonomy" id="409438"/>
    <lineage>
        <taxon>Bacteria</taxon>
        <taxon>Pseudomonadati</taxon>
        <taxon>Pseudomonadota</taxon>
        <taxon>Gammaproteobacteria</taxon>
        <taxon>Enterobacterales</taxon>
        <taxon>Enterobacteriaceae</taxon>
        <taxon>Escherichia</taxon>
    </lineage>
</organism>
<comment type="function">
    <text evidence="1">One of several proteins that assist in the late maturation steps of the functional core of the 30S ribosomal subunit. Associates with free 30S ribosomal subunits (but not with 30S subunits that are part of 70S ribosomes or polysomes). Required for efficient processing of 16S rRNA. May interact with the 5'-terminal helix region of 16S rRNA.</text>
</comment>
<comment type="subunit">
    <text evidence="1">Monomer. Binds 30S ribosomal subunits, but not 50S ribosomal subunits or 70S ribosomes.</text>
</comment>
<comment type="subcellular location">
    <subcellularLocation>
        <location evidence="1">Cytoplasm</location>
    </subcellularLocation>
</comment>
<comment type="similarity">
    <text evidence="1">Belongs to the RbfA family.</text>
</comment>
<keyword id="KW-0963">Cytoplasm</keyword>
<keyword id="KW-0690">Ribosome biogenesis</keyword>
<reference key="1">
    <citation type="journal article" date="2008" name="DNA Res.">
        <title>Complete genome sequence and comparative analysis of the wild-type commensal Escherichia coli strain SE11 isolated from a healthy adult.</title>
        <authorList>
            <person name="Oshima K."/>
            <person name="Toh H."/>
            <person name="Ogura Y."/>
            <person name="Sasamoto H."/>
            <person name="Morita H."/>
            <person name="Park S.-H."/>
            <person name="Ooka T."/>
            <person name="Iyoda S."/>
            <person name="Taylor T.D."/>
            <person name="Hayashi T."/>
            <person name="Itoh K."/>
            <person name="Hattori M."/>
        </authorList>
    </citation>
    <scope>NUCLEOTIDE SEQUENCE [LARGE SCALE GENOMIC DNA]</scope>
    <source>
        <strain>SE11</strain>
    </source>
</reference>
<gene>
    <name evidence="1" type="primary">rbfA</name>
    <name type="ordered locus">ECSE_3453</name>
</gene>
<sequence length="133" mass="15154">MAKEFGRPQRVAQEMQKEIALILQREIKDPRLGMMTTVSGVEMSRDLAYAKVYVTFLNDKDEDAVKAGIKALQEASGFIRSLLGKAMRLRIVPELTFFYDNSLVEGMRMSNLVTSVVKHDEERRVNPDDSKED</sequence>
<feature type="chain" id="PRO_1000088888" description="Ribosome-binding factor A">
    <location>
        <begin position="1"/>
        <end position="133"/>
    </location>
</feature>
<proteinExistence type="inferred from homology"/>
<evidence type="ECO:0000255" key="1">
    <source>
        <dbReference type="HAMAP-Rule" id="MF_00003"/>
    </source>
</evidence>